<reference key="1">
    <citation type="journal article" date="1996" name="Science">
        <title>Complete genome sequence of the methanogenic archaeon, Methanococcus jannaschii.</title>
        <authorList>
            <person name="Bult C.J."/>
            <person name="White O."/>
            <person name="Olsen G.J."/>
            <person name="Zhou L."/>
            <person name="Fleischmann R.D."/>
            <person name="Sutton G.G."/>
            <person name="Blake J.A."/>
            <person name="FitzGerald L.M."/>
            <person name="Clayton R.A."/>
            <person name="Gocayne J.D."/>
            <person name="Kerlavage A.R."/>
            <person name="Dougherty B.A."/>
            <person name="Tomb J.-F."/>
            <person name="Adams M.D."/>
            <person name="Reich C.I."/>
            <person name="Overbeek R."/>
            <person name="Kirkness E.F."/>
            <person name="Weinstock K.G."/>
            <person name="Merrick J.M."/>
            <person name="Glodek A."/>
            <person name="Scott J.L."/>
            <person name="Geoghagen N.S.M."/>
            <person name="Weidman J.F."/>
            <person name="Fuhrmann J.L."/>
            <person name="Nguyen D."/>
            <person name="Utterback T.R."/>
            <person name="Kelley J.M."/>
            <person name="Peterson J.D."/>
            <person name="Sadow P.W."/>
            <person name="Hanna M.C."/>
            <person name="Cotton M.D."/>
            <person name="Roberts K.M."/>
            <person name="Hurst M.A."/>
            <person name="Kaine B.P."/>
            <person name="Borodovsky M."/>
            <person name="Klenk H.-P."/>
            <person name="Fraser C.M."/>
            <person name="Smith H.O."/>
            <person name="Woese C.R."/>
            <person name="Venter J.C."/>
        </authorList>
    </citation>
    <scope>NUCLEOTIDE SEQUENCE [LARGE SCALE GENOMIC DNA]</scope>
    <source>
        <strain>ATCC 43067 / DSM 2661 / JAL-1 / JCM 10045 / NBRC 100440</strain>
    </source>
</reference>
<accession>P54064</accession>
<evidence type="ECO:0000255" key="1">
    <source>
        <dbReference type="HAMAP-Rule" id="MF_00773"/>
    </source>
</evidence>
<evidence type="ECO:0000305" key="2"/>
<organism>
    <name type="scientific">Methanocaldococcus jannaschii (strain ATCC 43067 / DSM 2661 / JAL-1 / JCM 10045 / NBRC 100440)</name>
    <name type="common">Methanococcus jannaschii</name>
    <dbReference type="NCBI Taxonomy" id="243232"/>
    <lineage>
        <taxon>Archaea</taxon>
        <taxon>Methanobacteriati</taxon>
        <taxon>Methanobacteriota</taxon>
        <taxon>Methanomada group</taxon>
        <taxon>Methanococci</taxon>
        <taxon>Methanococcales</taxon>
        <taxon>Methanocaldococcaceae</taxon>
        <taxon>Methanocaldococcus</taxon>
    </lineage>
</organism>
<keyword id="KW-0479">Metal-binding</keyword>
<keyword id="KW-1185">Reference proteome</keyword>
<keyword id="KW-0687">Ribonucleoprotein</keyword>
<keyword id="KW-0689">Ribosomal protein</keyword>
<keyword id="KW-0694">RNA-binding</keyword>
<keyword id="KW-0699">rRNA-binding</keyword>
<keyword id="KW-0862">Zinc</keyword>
<keyword id="KW-0863">Zinc-finger</keyword>
<comment type="function">
    <text evidence="1">Binds to the 23S rRNA.</text>
</comment>
<comment type="cofactor">
    <cofactor evidence="1">
        <name>Zn(2+)</name>
        <dbReference type="ChEBI" id="CHEBI:29105"/>
    </cofactor>
    <text evidence="1">Binds 1 zinc ion per subunit.</text>
</comment>
<comment type="subunit">
    <text evidence="1">Part of the 50S ribosomal subunit. Forms a cluster with proteins L3 and L14.</text>
</comment>
<comment type="similarity">
    <text evidence="1">Belongs to the eukaryotic ribosomal protein eL24 family.</text>
</comment>
<name>RL24E_METJA</name>
<gene>
    <name evidence="1" type="primary">rpl24e</name>
    <name type="ordered locus">MJ1201</name>
</gene>
<proteinExistence type="inferred from homology"/>
<feature type="chain" id="PRO_0000136916" description="Large ribosomal subunit protein eL24">
    <location>
        <begin position="1"/>
        <end position="70"/>
    </location>
</feature>
<feature type="zinc finger region" description="C4-type" evidence="1">
    <location>
        <begin position="7"/>
        <end position="37"/>
    </location>
</feature>
<feature type="binding site" evidence="1">
    <location>
        <position position="7"/>
    </location>
    <ligand>
        <name>Zn(2+)</name>
        <dbReference type="ChEBI" id="CHEBI:29105"/>
    </ligand>
</feature>
<feature type="binding site" evidence="1">
    <location>
        <position position="10"/>
    </location>
    <ligand>
        <name>Zn(2+)</name>
        <dbReference type="ChEBI" id="CHEBI:29105"/>
    </ligand>
</feature>
<feature type="binding site" evidence="1">
    <location>
        <position position="33"/>
    </location>
    <ligand>
        <name>Zn(2+)</name>
        <dbReference type="ChEBI" id="CHEBI:29105"/>
    </ligand>
</feature>
<feature type="binding site" evidence="1">
    <location>
        <position position="37"/>
    </location>
    <ligand>
        <name>Zn(2+)</name>
        <dbReference type="ChEBI" id="CHEBI:29105"/>
    </ligand>
</feature>
<protein>
    <recommendedName>
        <fullName evidence="1">Large ribosomal subunit protein eL24</fullName>
    </recommendedName>
    <alternativeName>
        <fullName evidence="2">50S ribosomal protein L24e</fullName>
    </alternativeName>
</protein>
<dbReference type="EMBL" id="L77117">
    <property type="protein sequence ID" value="AAB99205.1"/>
    <property type="molecule type" value="Genomic_DNA"/>
</dbReference>
<dbReference type="PIR" id="H64449">
    <property type="entry name" value="H64449"/>
</dbReference>
<dbReference type="RefSeq" id="WP_010870713.1">
    <property type="nucleotide sequence ID" value="NC_000909.1"/>
</dbReference>
<dbReference type="SMR" id="P54064"/>
<dbReference type="FunCoup" id="P54064">
    <property type="interactions" value="63"/>
</dbReference>
<dbReference type="STRING" id="243232.MJ_1201"/>
<dbReference type="PaxDb" id="243232-MJ_1201"/>
<dbReference type="EnsemblBacteria" id="AAB99205">
    <property type="protein sequence ID" value="AAB99205"/>
    <property type="gene ID" value="MJ_1201"/>
</dbReference>
<dbReference type="GeneID" id="8804674"/>
<dbReference type="KEGG" id="mja:MJ_1201"/>
<dbReference type="eggNOG" id="arCOG01950">
    <property type="taxonomic scope" value="Archaea"/>
</dbReference>
<dbReference type="HOGENOM" id="CLU_190191_0_0_2"/>
<dbReference type="InParanoid" id="P54064"/>
<dbReference type="OrthoDB" id="55506at2157"/>
<dbReference type="PhylomeDB" id="P54064"/>
<dbReference type="Proteomes" id="UP000000805">
    <property type="component" value="Chromosome"/>
</dbReference>
<dbReference type="GO" id="GO:1990904">
    <property type="term" value="C:ribonucleoprotein complex"/>
    <property type="evidence" value="ECO:0007669"/>
    <property type="project" value="UniProtKB-KW"/>
</dbReference>
<dbReference type="GO" id="GO:0005840">
    <property type="term" value="C:ribosome"/>
    <property type="evidence" value="ECO:0007669"/>
    <property type="project" value="UniProtKB-KW"/>
</dbReference>
<dbReference type="GO" id="GO:0019843">
    <property type="term" value="F:rRNA binding"/>
    <property type="evidence" value="ECO:0007669"/>
    <property type="project" value="UniProtKB-UniRule"/>
</dbReference>
<dbReference type="GO" id="GO:0003735">
    <property type="term" value="F:structural constituent of ribosome"/>
    <property type="evidence" value="ECO:0007669"/>
    <property type="project" value="InterPro"/>
</dbReference>
<dbReference type="GO" id="GO:0008270">
    <property type="term" value="F:zinc ion binding"/>
    <property type="evidence" value="ECO:0007669"/>
    <property type="project" value="UniProtKB-UniRule"/>
</dbReference>
<dbReference type="GO" id="GO:0006412">
    <property type="term" value="P:translation"/>
    <property type="evidence" value="ECO:0007669"/>
    <property type="project" value="UniProtKB-UniRule"/>
</dbReference>
<dbReference type="CDD" id="cd00472">
    <property type="entry name" value="Ribosomal_L24e_L24"/>
    <property type="match status" value="1"/>
</dbReference>
<dbReference type="FunFam" id="2.30.170.20:FF:000001">
    <property type="entry name" value="probable ribosome biogenesis protein RLP24"/>
    <property type="match status" value="1"/>
</dbReference>
<dbReference type="Gene3D" id="2.30.170.20">
    <property type="entry name" value="Ribosomal protein L24e"/>
    <property type="match status" value="1"/>
</dbReference>
<dbReference type="HAMAP" id="MF_00773">
    <property type="entry name" value="Ribosomal_eL24"/>
    <property type="match status" value="1"/>
</dbReference>
<dbReference type="InterPro" id="IPR038630">
    <property type="entry name" value="L24e/L24_sf"/>
</dbReference>
<dbReference type="InterPro" id="IPR056366">
    <property type="entry name" value="Ribosomal_eL24"/>
</dbReference>
<dbReference type="InterPro" id="IPR055345">
    <property type="entry name" value="Ribosomal_eL24-rel_arc"/>
</dbReference>
<dbReference type="InterPro" id="IPR000988">
    <property type="entry name" value="Ribosomal_eL24-rel_N"/>
</dbReference>
<dbReference type="InterPro" id="IPR023442">
    <property type="entry name" value="Ribosomal_eL24_CS"/>
</dbReference>
<dbReference type="InterPro" id="IPR011017">
    <property type="entry name" value="TRASH_dom"/>
</dbReference>
<dbReference type="NCBIfam" id="NF034186">
    <property type="entry name" value="PRK14891.1-1"/>
    <property type="match status" value="1"/>
</dbReference>
<dbReference type="PANTHER" id="PTHR10792">
    <property type="entry name" value="60S RIBOSOMAL PROTEIN L24"/>
    <property type="match status" value="1"/>
</dbReference>
<dbReference type="PANTHER" id="PTHR10792:SF1">
    <property type="entry name" value="RIBOSOMAL PROTEIN L24"/>
    <property type="match status" value="1"/>
</dbReference>
<dbReference type="Pfam" id="PF01246">
    <property type="entry name" value="Ribosomal_L24e"/>
    <property type="match status" value="1"/>
</dbReference>
<dbReference type="SMART" id="SM00746">
    <property type="entry name" value="TRASH"/>
    <property type="match status" value="1"/>
</dbReference>
<dbReference type="SUPFAM" id="SSF57716">
    <property type="entry name" value="Glucocorticoid receptor-like (DNA-binding domain)"/>
    <property type="match status" value="1"/>
</dbReference>
<dbReference type="PROSITE" id="PS01073">
    <property type="entry name" value="RIBOSOMAL_L24E"/>
    <property type="match status" value="1"/>
</dbReference>
<sequence length="70" mass="8249">MPEWRTCSFCGYEIEPGKGKMVVEKDGTVLYFCSSKCEKSYRMGRNPRKLKWTKVYQDMKAELKKAQESQ</sequence>